<evidence type="ECO:0000255" key="1">
    <source>
        <dbReference type="HAMAP-Rule" id="MF_00006"/>
    </source>
</evidence>
<keyword id="KW-0028">Amino-acid biosynthesis</keyword>
<keyword id="KW-0055">Arginine biosynthesis</keyword>
<keyword id="KW-0963">Cytoplasm</keyword>
<keyword id="KW-0456">Lyase</keyword>
<dbReference type="EC" id="4.3.2.1" evidence="1"/>
<dbReference type="EMBL" id="CP001283">
    <property type="protein sequence ID" value="ACK92244.1"/>
    <property type="molecule type" value="Genomic_DNA"/>
</dbReference>
<dbReference type="RefSeq" id="WP_000041267.1">
    <property type="nucleotide sequence ID" value="NC_011773.1"/>
</dbReference>
<dbReference type="SMR" id="B7JS05"/>
<dbReference type="KEGG" id="bcu:BCAH820_4747"/>
<dbReference type="HOGENOM" id="CLU_027272_2_3_9"/>
<dbReference type="UniPathway" id="UPA00068">
    <property type="reaction ID" value="UER00114"/>
</dbReference>
<dbReference type="Proteomes" id="UP000001363">
    <property type="component" value="Chromosome"/>
</dbReference>
<dbReference type="GO" id="GO:0005829">
    <property type="term" value="C:cytosol"/>
    <property type="evidence" value="ECO:0007669"/>
    <property type="project" value="TreeGrafter"/>
</dbReference>
<dbReference type="GO" id="GO:0004056">
    <property type="term" value="F:argininosuccinate lyase activity"/>
    <property type="evidence" value="ECO:0007669"/>
    <property type="project" value="UniProtKB-UniRule"/>
</dbReference>
<dbReference type="GO" id="GO:0042450">
    <property type="term" value="P:arginine biosynthetic process via ornithine"/>
    <property type="evidence" value="ECO:0007669"/>
    <property type="project" value="InterPro"/>
</dbReference>
<dbReference type="GO" id="GO:0006526">
    <property type="term" value="P:L-arginine biosynthetic process"/>
    <property type="evidence" value="ECO:0007669"/>
    <property type="project" value="UniProtKB-UniRule"/>
</dbReference>
<dbReference type="CDD" id="cd01359">
    <property type="entry name" value="Argininosuccinate_lyase"/>
    <property type="match status" value="1"/>
</dbReference>
<dbReference type="FunFam" id="1.10.275.10:FF:000002">
    <property type="entry name" value="Argininosuccinate lyase"/>
    <property type="match status" value="1"/>
</dbReference>
<dbReference type="FunFam" id="1.10.40.30:FF:000001">
    <property type="entry name" value="Argininosuccinate lyase"/>
    <property type="match status" value="1"/>
</dbReference>
<dbReference type="FunFam" id="1.20.200.10:FF:000006">
    <property type="entry name" value="Argininosuccinate lyase"/>
    <property type="match status" value="1"/>
</dbReference>
<dbReference type="Gene3D" id="1.10.40.30">
    <property type="entry name" value="Fumarase/aspartase (C-terminal domain)"/>
    <property type="match status" value="1"/>
</dbReference>
<dbReference type="Gene3D" id="1.20.200.10">
    <property type="entry name" value="Fumarase/aspartase (Central domain)"/>
    <property type="match status" value="1"/>
</dbReference>
<dbReference type="Gene3D" id="1.10.275.10">
    <property type="entry name" value="Fumarase/aspartase (N-terminal domain)"/>
    <property type="match status" value="1"/>
</dbReference>
<dbReference type="HAMAP" id="MF_00006">
    <property type="entry name" value="Arg_succ_lyase"/>
    <property type="match status" value="1"/>
</dbReference>
<dbReference type="InterPro" id="IPR029419">
    <property type="entry name" value="Arg_succ_lyase_C"/>
</dbReference>
<dbReference type="InterPro" id="IPR009049">
    <property type="entry name" value="Argininosuccinate_lyase"/>
</dbReference>
<dbReference type="InterPro" id="IPR024083">
    <property type="entry name" value="Fumarase/histidase_N"/>
</dbReference>
<dbReference type="InterPro" id="IPR020557">
    <property type="entry name" value="Fumarate_lyase_CS"/>
</dbReference>
<dbReference type="InterPro" id="IPR000362">
    <property type="entry name" value="Fumarate_lyase_fam"/>
</dbReference>
<dbReference type="InterPro" id="IPR022761">
    <property type="entry name" value="Fumarate_lyase_N"/>
</dbReference>
<dbReference type="InterPro" id="IPR008948">
    <property type="entry name" value="L-Aspartase-like"/>
</dbReference>
<dbReference type="NCBIfam" id="TIGR00838">
    <property type="entry name" value="argH"/>
    <property type="match status" value="1"/>
</dbReference>
<dbReference type="PANTHER" id="PTHR43814">
    <property type="entry name" value="ARGININOSUCCINATE LYASE"/>
    <property type="match status" value="1"/>
</dbReference>
<dbReference type="PANTHER" id="PTHR43814:SF1">
    <property type="entry name" value="ARGININOSUCCINATE LYASE"/>
    <property type="match status" value="1"/>
</dbReference>
<dbReference type="Pfam" id="PF14698">
    <property type="entry name" value="ASL_C2"/>
    <property type="match status" value="1"/>
</dbReference>
<dbReference type="Pfam" id="PF00206">
    <property type="entry name" value="Lyase_1"/>
    <property type="match status" value="1"/>
</dbReference>
<dbReference type="PRINTS" id="PR00145">
    <property type="entry name" value="ARGSUCLYASE"/>
</dbReference>
<dbReference type="PRINTS" id="PR00149">
    <property type="entry name" value="FUMRATELYASE"/>
</dbReference>
<dbReference type="SUPFAM" id="SSF48557">
    <property type="entry name" value="L-aspartase-like"/>
    <property type="match status" value="1"/>
</dbReference>
<dbReference type="PROSITE" id="PS00163">
    <property type="entry name" value="FUMARATE_LYASES"/>
    <property type="match status" value="1"/>
</dbReference>
<reference key="1">
    <citation type="submission" date="2008-10" db="EMBL/GenBank/DDBJ databases">
        <title>Genome sequence of Bacillus cereus AH820.</title>
        <authorList>
            <person name="Dodson R.J."/>
            <person name="Durkin A.S."/>
            <person name="Rosovitz M.J."/>
            <person name="Rasko D.A."/>
            <person name="Hoffmaster A."/>
            <person name="Ravel J."/>
            <person name="Sutton G."/>
        </authorList>
    </citation>
    <scope>NUCLEOTIDE SEQUENCE [LARGE SCALE GENOMIC DNA]</scope>
    <source>
        <strain>AH820</strain>
    </source>
</reference>
<name>ARLY_BACC0</name>
<comment type="catalytic activity">
    <reaction evidence="1">
        <text>2-(N(omega)-L-arginino)succinate = fumarate + L-arginine</text>
        <dbReference type="Rhea" id="RHEA:24020"/>
        <dbReference type="ChEBI" id="CHEBI:29806"/>
        <dbReference type="ChEBI" id="CHEBI:32682"/>
        <dbReference type="ChEBI" id="CHEBI:57472"/>
        <dbReference type="EC" id="4.3.2.1"/>
    </reaction>
</comment>
<comment type="pathway">
    <text evidence="1">Amino-acid biosynthesis; L-arginine biosynthesis; L-arginine from L-ornithine and carbamoyl phosphate: step 3/3.</text>
</comment>
<comment type="subcellular location">
    <subcellularLocation>
        <location evidence="1">Cytoplasm</location>
    </subcellularLocation>
</comment>
<comment type="similarity">
    <text evidence="1">Belongs to the lyase 1 family. Argininosuccinate lyase subfamily.</text>
</comment>
<gene>
    <name evidence="1" type="primary">argH</name>
    <name type="ordered locus">BCAH820_4747</name>
</gene>
<accession>B7JS05</accession>
<proteinExistence type="inferred from homology"/>
<protein>
    <recommendedName>
        <fullName evidence="1">Argininosuccinate lyase</fullName>
        <shortName evidence="1">ASAL</shortName>
        <ecNumber evidence="1">4.3.2.1</ecNumber>
    </recommendedName>
    <alternativeName>
        <fullName evidence="1">Arginosuccinase</fullName>
    </alternativeName>
</protein>
<organism>
    <name type="scientific">Bacillus cereus (strain AH820)</name>
    <dbReference type="NCBI Taxonomy" id="405535"/>
    <lineage>
        <taxon>Bacteria</taxon>
        <taxon>Bacillati</taxon>
        <taxon>Bacillota</taxon>
        <taxon>Bacilli</taxon>
        <taxon>Bacillales</taxon>
        <taxon>Bacillaceae</taxon>
        <taxon>Bacillus</taxon>
        <taxon>Bacillus cereus group</taxon>
    </lineage>
</organism>
<feature type="chain" id="PRO_1000116196" description="Argininosuccinate lyase">
    <location>
        <begin position="1"/>
        <end position="462"/>
    </location>
</feature>
<sequence length="462" mass="52121">MSKLWGGRFTEEAEAWVEEFGASISFDQQLVNQDINGSIAHVTMLAKQGIVTKEEAEKIKIGLQYLLEEAKQNKLHFSVEAEDIHLNIEKMLIEKIGEVGGKLHTGRSRNDQVATDMHLYLKEKVEHIMKATKQLQTVLVHQAENNIETIMPGYTHLQRAQPISFAHHILAYFWMLERDVNRYEDSLKRINISPLGAGALAGTTFPIDREYSAELLGLNGIYENSLDAVSDRDFILEFLSNSSMLMMHLSRFCEELILWSSQEFQFIEMSDQYATGSSIMPQKKNPDMAELIRGKTGRVYGNLFSLLTVMKGLPLAYNKDLQEDKEGMFDTVKTVEGCLHIMAGMLETMTVNKEKMGQAVTQDFSNATEIADYLANKGLPFRQAHEIVGKLVLHCTQKGIYLVDVPLATYKEMSSLFEEDLYEVLSPYAAVKRRNSAGGTGFEQIEKALEKAKGLTKEAIKN</sequence>